<organism>
    <name type="scientific">Ehrlichia chaffeensis (strain ATCC CRL-10679 / Arkansas)</name>
    <dbReference type="NCBI Taxonomy" id="205920"/>
    <lineage>
        <taxon>Bacteria</taxon>
        <taxon>Pseudomonadati</taxon>
        <taxon>Pseudomonadota</taxon>
        <taxon>Alphaproteobacteria</taxon>
        <taxon>Rickettsiales</taxon>
        <taxon>Anaplasmataceae</taxon>
        <taxon>Ehrlichia</taxon>
    </lineage>
</organism>
<protein>
    <recommendedName>
        <fullName evidence="1">Nucleoside triphosphate pyrophosphatase</fullName>
        <ecNumber evidence="1">3.6.1.9</ecNumber>
    </recommendedName>
    <alternativeName>
        <fullName evidence="1">Nucleotide pyrophosphatase</fullName>
        <shortName evidence="1">Nucleotide PPase</shortName>
    </alternativeName>
</protein>
<accession>Q2GGV6</accession>
<keyword id="KW-0963">Cytoplasm</keyword>
<keyword id="KW-0378">Hydrolase</keyword>
<keyword id="KW-0546">Nucleotide metabolism</keyword>
<keyword id="KW-1185">Reference proteome</keyword>
<sequence>MLKFDNLILASSSEQRLSLLEQIGVIPGQVVSPDIDEVVLKKELPKVYSIRIAKEKGTKVRVLYPDKFILSADTVVCCGRRVLPKAETEEQALECIRLISGRRHRVYTTVCLYTPYNKLHCRNVMTIVKFKHLSMQEINSYIMSGQWKGKSGACSIQTSAGKFVLSINGSYSSVIGLPLYETYSILSQYFSI</sequence>
<proteinExistence type="inferred from homology"/>
<name>NTPP_EHRCR</name>
<gene>
    <name type="ordered locus">ECH_0512</name>
</gene>
<reference key="1">
    <citation type="journal article" date="2006" name="PLoS Genet.">
        <title>Comparative genomics of emerging human ehrlichiosis agents.</title>
        <authorList>
            <person name="Dunning Hotopp J.C."/>
            <person name="Lin M."/>
            <person name="Madupu R."/>
            <person name="Crabtree J."/>
            <person name="Angiuoli S.V."/>
            <person name="Eisen J.A."/>
            <person name="Seshadri R."/>
            <person name="Ren Q."/>
            <person name="Wu M."/>
            <person name="Utterback T.R."/>
            <person name="Smith S."/>
            <person name="Lewis M."/>
            <person name="Khouri H."/>
            <person name="Zhang C."/>
            <person name="Niu H."/>
            <person name="Lin Q."/>
            <person name="Ohashi N."/>
            <person name="Zhi N."/>
            <person name="Nelson W.C."/>
            <person name="Brinkac L.M."/>
            <person name="Dodson R.J."/>
            <person name="Rosovitz M.J."/>
            <person name="Sundaram J.P."/>
            <person name="Daugherty S.C."/>
            <person name="Davidsen T."/>
            <person name="Durkin A.S."/>
            <person name="Gwinn M.L."/>
            <person name="Haft D.H."/>
            <person name="Selengut J.D."/>
            <person name="Sullivan S.A."/>
            <person name="Zafar N."/>
            <person name="Zhou L."/>
            <person name="Benahmed F."/>
            <person name="Forberger H."/>
            <person name="Halpin R."/>
            <person name="Mulligan S."/>
            <person name="Robinson J."/>
            <person name="White O."/>
            <person name="Rikihisa Y."/>
            <person name="Tettelin H."/>
        </authorList>
    </citation>
    <scope>NUCLEOTIDE SEQUENCE [LARGE SCALE GENOMIC DNA]</scope>
    <source>
        <strain>ATCC CRL-10679 / Arkansas</strain>
    </source>
</reference>
<comment type="function">
    <text evidence="1">Nucleoside triphosphate pyrophosphatase. May have a dual role in cell division arrest and in preventing the incorporation of modified nucleotides into cellular nucleic acids.</text>
</comment>
<comment type="catalytic activity">
    <reaction evidence="1">
        <text>a ribonucleoside 5'-triphosphate + H2O = a ribonucleoside 5'-phosphate + diphosphate + H(+)</text>
        <dbReference type="Rhea" id="RHEA:23996"/>
        <dbReference type="ChEBI" id="CHEBI:15377"/>
        <dbReference type="ChEBI" id="CHEBI:15378"/>
        <dbReference type="ChEBI" id="CHEBI:33019"/>
        <dbReference type="ChEBI" id="CHEBI:58043"/>
        <dbReference type="ChEBI" id="CHEBI:61557"/>
        <dbReference type="EC" id="3.6.1.9"/>
    </reaction>
</comment>
<comment type="catalytic activity">
    <reaction evidence="1">
        <text>a 2'-deoxyribonucleoside 5'-triphosphate + H2O = a 2'-deoxyribonucleoside 5'-phosphate + diphosphate + H(+)</text>
        <dbReference type="Rhea" id="RHEA:44644"/>
        <dbReference type="ChEBI" id="CHEBI:15377"/>
        <dbReference type="ChEBI" id="CHEBI:15378"/>
        <dbReference type="ChEBI" id="CHEBI:33019"/>
        <dbReference type="ChEBI" id="CHEBI:61560"/>
        <dbReference type="ChEBI" id="CHEBI:65317"/>
        <dbReference type="EC" id="3.6.1.9"/>
    </reaction>
</comment>
<comment type="cofactor">
    <cofactor evidence="1">
        <name>a divalent metal cation</name>
        <dbReference type="ChEBI" id="CHEBI:60240"/>
    </cofactor>
</comment>
<comment type="subcellular location">
    <subcellularLocation>
        <location evidence="1">Cytoplasm</location>
    </subcellularLocation>
</comment>
<comment type="similarity">
    <text evidence="1">Belongs to the Maf family.</text>
</comment>
<dbReference type="EC" id="3.6.1.9" evidence="1"/>
<dbReference type="EMBL" id="CP000236">
    <property type="protein sequence ID" value="ABD44795.1"/>
    <property type="molecule type" value="Genomic_DNA"/>
</dbReference>
<dbReference type="RefSeq" id="WP_006010914.1">
    <property type="nucleotide sequence ID" value="NC_007799.1"/>
</dbReference>
<dbReference type="SMR" id="Q2GGV6"/>
<dbReference type="STRING" id="205920.ECH_0512"/>
<dbReference type="KEGG" id="ech:ECH_0512"/>
<dbReference type="eggNOG" id="COG0424">
    <property type="taxonomic scope" value="Bacteria"/>
</dbReference>
<dbReference type="HOGENOM" id="CLU_040416_2_0_5"/>
<dbReference type="OrthoDB" id="9807767at2"/>
<dbReference type="Proteomes" id="UP000008320">
    <property type="component" value="Chromosome"/>
</dbReference>
<dbReference type="GO" id="GO:0005737">
    <property type="term" value="C:cytoplasm"/>
    <property type="evidence" value="ECO:0007669"/>
    <property type="project" value="UniProtKB-SubCell"/>
</dbReference>
<dbReference type="GO" id="GO:0047429">
    <property type="term" value="F:nucleoside triphosphate diphosphatase activity"/>
    <property type="evidence" value="ECO:0007669"/>
    <property type="project" value="UniProtKB-EC"/>
</dbReference>
<dbReference type="GO" id="GO:0009117">
    <property type="term" value="P:nucleotide metabolic process"/>
    <property type="evidence" value="ECO:0007669"/>
    <property type="project" value="UniProtKB-KW"/>
</dbReference>
<dbReference type="CDD" id="cd00555">
    <property type="entry name" value="Maf"/>
    <property type="match status" value="1"/>
</dbReference>
<dbReference type="Gene3D" id="3.90.950.10">
    <property type="match status" value="1"/>
</dbReference>
<dbReference type="HAMAP" id="MF_00528">
    <property type="entry name" value="Maf"/>
    <property type="match status" value="1"/>
</dbReference>
<dbReference type="InterPro" id="IPR029001">
    <property type="entry name" value="ITPase-like_fam"/>
</dbReference>
<dbReference type="InterPro" id="IPR003697">
    <property type="entry name" value="Maf-like"/>
</dbReference>
<dbReference type="NCBIfam" id="TIGR00172">
    <property type="entry name" value="maf"/>
    <property type="match status" value="1"/>
</dbReference>
<dbReference type="NCBIfam" id="NF010946">
    <property type="entry name" value="PRK14366.1"/>
    <property type="match status" value="1"/>
</dbReference>
<dbReference type="PANTHER" id="PTHR43213">
    <property type="entry name" value="BIFUNCTIONAL DTTP/UTP PYROPHOSPHATASE/METHYLTRANSFERASE PROTEIN-RELATED"/>
    <property type="match status" value="1"/>
</dbReference>
<dbReference type="PANTHER" id="PTHR43213:SF5">
    <property type="entry name" value="BIFUNCTIONAL DTTP_UTP PYROPHOSPHATASE_METHYLTRANSFERASE PROTEIN-RELATED"/>
    <property type="match status" value="1"/>
</dbReference>
<dbReference type="Pfam" id="PF02545">
    <property type="entry name" value="Maf"/>
    <property type="match status" value="1"/>
</dbReference>
<dbReference type="PIRSF" id="PIRSF006305">
    <property type="entry name" value="Maf"/>
    <property type="match status" value="1"/>
</dbReference>
<dbReference type="SUPFAM" id="SSF52972">
    <property type="entry name" value="ITPase-like"/>
    <property type="match status" value="1"/>
</dbReference>
<evidence type="ECO:0000255" key="1">
    <source>
        <dbReference type="HAMAP-Rule" id="MF_00528"/>
    </source>
</evidence>
<feature type="chain" id="PRO_0000267303" description="Nucleoside triphosphate pyrophosphatase">
    <location>
        <begin position="1"/>
        <end position="192"/>
    </location>
</feature>
<feature type="active site" description="Proton acceptor" evidence="1">
    <location>
        <position position="73"/>
    </location>
</feature>